<keyword id="KW-0963">Cytoplasm</keyword>
<keyword id="KW-0328">Glycosyltransferase</keyword>
<keyword id="KW-0660">Purine salvage</keyword>
<keyword id="KW-0808">Transferase</keyword>
<organism>
    <name type="scientific">Shewanella baltica (strain OS223)</name>
    <dbReference type="NCBI Taxonomy" id="407976"/>
    <lineage>
        <taxon>Bacteria</taxon>
        <taxon>Pseudomonadati</taxon>
        <taxon>Pseudomonadota</taxon>
        <taxon>Gammaproteobacteria</taxon>
        <taxon>Alteromonadales</taxon>
        <taxon>Shewanellaceae</taxon>
        <taxon>Shewanella</taxon>
    </lineage>
</organism>
<reference key="1">
    <citation type="submission" date="2008-12" db="EMBL/GenBank/DDBJ databases">
        <title>Complete sequence of chromosome of Shewanella baltica OS223.</title>
        <authorList>
            <consortium name="US DOE Joint Genome Institute"/>
            <person name="Lucas S."/>
            <person name="Copeland A."/>
            <person name="Lapidus A."/>
            <person name="Glavina del Rio T."/>
            <person name="Dalin E."/>
            <person name="Tice H."/>
            <person name="Bruce D."/>
            <person name="Goodwin L."/>
            <person name="Pitluck S."/>
            <person name="Chertkov O."/>
            <person name="Meincke L."/>
            <person name="Brettin T."/>
            <person name="Detter J.C."/>
            <person name="Han C."/>
            <person name="Kuske C.R."/>
            <person name="Larimer F."/>
            <person name="Land M."/>
            <person name="Hauser L."/>
            <person name="Kyrpides N."/>
            <person name="Ovchinnikova G."/>
            <person name="Brettar I."/>
            <person name="Rodrigues J."/>
            <person name="Konstantinidis K."/>
            <person name="Tiedje J."/>
        </authorList>
    </citation>
    <scope>NUCLEOTIDE SEQUENCE [LARGE SCALE GENOMIC DNA]</scope>
    <source>
        <strain>OS223</strain>
    </source>
</reference>
<feature type="chain" id="PRO_1000116255" description="Adenine phosphoribosyltransferase">
    <location>
        <begin position="1"/>
        <end position="184"/>
    </location>
</feature>
<dbReference type="EC" id="2.4.2.7" evidence="1"/>
<dbReference type="EMBL" id="CP001252">
    <property type="protein sequence ID" value="ACK46273.1"/>
    <property type="molecule type" value="Genomic_DNA"/>
</dbReference>
<dbReference type="SMR" id="B8E700"/>
<dbReference type="KEGG" id="sbp:Sbal223_1768"/>
<dbReference type="HOGENOM" id="CLU_063339_3_0_6"/>
<dbReference type="UniPathway" id="UPA00588">
    <property type="reaction ID" value="UER00646"/>
</dbReference>
<dbReference type="Proteomes" id="UP000002507">
    <property type="component" value="Chromosome"/>
</dbReference>
<dbReference type="GO" id="GO:0005737">
    <property type="term" value="C:cytoplasm"/>
    <property type="evidence" value="ECO:0007669"/>
    <property type="project" value="UniProtKB-SubCell"/>
</dbReference>
<dbReference type="GO" id="GO:0002055">
    <property type="term" value="F:adenine binding"/>
    <property type="evidence" value="ECO:0007669"/>
    <property type="project" value="TreeGrafter"/>
</dbReference>
<dbReference type="GO" id="GO:0003999">
    <property type="term" value="F:adenine phosphoribosyltransferase activity"/>
    <property type="evidence" value="ECO:0007669"/>
    <property type="project" value="UniProtKB-UniRule"/>
</dbReference>
<dbReference type="GO" id="GO:0016208">
    <property type="term" value="F:AMP binding"/>
    <property type="evidence" value="ECO:0007669"/>
    <property type="project" value="TreeGrafter"/>
</dbReference>
<dbReference type="GO" id="GO:0006168">
    <property type="term" value="P:adenine salvage"/>
    <property type="evidence" value="ECO:0007669"/>
    <property type="project" value="InterPro"/>
</dbReference>
<dbReference type="GO" id="GO:0044209">
    <property type="term" value="P:AMP salvage"/>
    <property type="evidence" value="ECO:0007669"/>
    <property type="project" value="UniProtKB-UniRule"/>
</dbReference>
<dbReference type="GO" id="GO:0006166">
    <property type="term" value="P:purine ribonucleoside salvage"/>
    <property type="evidence" value="ECO:0007669"/>
    <property type="project" value="UniProtKB-KW"/>
</dbReference>
<dbReference type="CDD" id="cd06223">
    <property type="entry name" value="PRTases_typeI"/>
    <property type="match status" value="1"/>
</dbReference>
<dbReference type="FunFam" id="3.40.50.2020:FF:000004">
    <property type="entry name" value="Adenine phosphoribosyltransferase"/>
    <property type="match status" value="1"/>
</dbReference>
<dbReference type="Gene3D" id="3.40.50.2020">
    <property type="match status" value="1"/>
</dbReference>
<dbReference type="HAMAP" id="MF_00004">
    <property type="entry name" value="Aden_phosphoribosyltr"/>
    <property type="match status" value="1"/>
</dbReference>
<dbReference type="InterPro" id="IPR005764">
    <property type="entry name" value="Ade_phspho_trans"/>
</dbReference>
<dbReference type="InterPro" id="IPR000836">
    <property type="entry name" value="PRibTrfase_dom"/>
</dbReference>
<dbReference type="InterPro" id="IPR029057">
    <property type="entry name" value="PRTase-like"/>
</dbReference>
<dbReference type="InterPro" id="IPR050054">
    <property type="entry name" value="UPRTase/APRTase"/>
</dbReference>
<dbReference type="NCBIfam" id="TIGR01090">
    <property type="entry name" value="apt"/>
    <property type="match status" value="1"/>
</dbReference>
<dbReference type="NCBIfam" id="NF002632">
    <property type="entry name" value="PRK02304.1-1"/>
    <property type="match status" value="1"/>
</dbReference>
<dbReference type="NCBIfam" id="NF002634">
    <property type="entry name" value="PRK02304.1-3"/>
    <property type="match status" value="1"/>
</dbReference>
<dbReference type="NCBIfam" id="NF002636">
    <property type="entry name" value="PRK02304.1-5"/>
    <property type="match status" value="1"/>
</dbReference>
<dbReference type="PANTHER" id="PTHR32315">
    <property type="entry name" value="ADENINE PHOSPHORIBOSYLTRANSFERASE"/>
    <property type="match status" value="1"/>
</dbReference>
<dbReference type="PANTHER" id="PTHR32315:SF3">
    <property type="entry name" value="ADENINE PHOSPHORIBOSYLTRANSFERASE"/>
    <property type="match status" value="1"/>
</dbReference>
<dbReference type="Pfam" id="PF00156">
    <property type="entry name" value="Pribosyltran"/>
    <property type="match status" value="1"/>
</dbReference>
<dbReference type="SUPFAM" id="SSF53271">
    <property type="entry name" value="PRTase-like"/>
    <property type="match status" value="1"/>
</dbReference>
<dbReference type="PROSITE" id="PS00103">
    <property type="entry name" value="PUR_PYR_PR_TRANSFER"/>
    <property type="match status" value="1"/>
</dbReference>
<sequence>MMAMNTETLSLIKQSIKTIPNYPKEGILFRDVTSLLENAAAYKATIDLLVEHYRGQGFTKIVGTEARGFLFGAPLALELGVGFVPVRKPGKLPRATISQSYELEYGHDSLEIHTDAINPNDKVLVVDDLLATGGTIEATVKLIRQLGGEVKHAAFVISLPDLGGEARLTALGLELVKLCEFEGE</sequence>
<proteinExistence type="inferred from homology"/>
<accession>B8E700</accession>
<name>APT_SHEB2</name>
<protein>
    <recommendedName>
        <fullName evidence="1">Adenine phosphoribosyltransferase</fullName>
        <shortName evidence="1">APRT</shortName>
        <ecNumber evidence="1">2.4.2.7</ecNumber>
    </recommendedName>
</protein>
<evidence type="ECO:0000255" key="1">
    <source>
        <dbReference type="HAMAP-Rule" id="MF_00004"/>
    </source>
</evidence>
<gene>
    <name evidence="1" type="primary">apt</name>
    <name type="ordered locus">Sbal223_1768</name>
</gene>
<comment type="function">
    <text evidence="1">Catalyzes a salvage reaction resulting in the formation of AMP, that is energically less costly than de novo synthesis.</text>
</comment>
<comment type="catalytic activity">
    <reaction evidence="1">
        <text>AMP + diphosphate = 5-phospho-alpha-D-ribose 1-diphosphate + adenine</text>
        <dbReference type="Rhea" id="RHEA:16609"/>
        <dbReference type="ChEBI" id="CHEBI:16708"/>
        <dbReference type="ChEBI" id="CHEBI:33019"/>
        <dbReference type="ChEBI" id="CHEBI:58017"/>
        <dbReference type="ChEBI" id="CHEBI:456215"/>
        <dbReference type="EC" id="2.4.2.7"/>
    </reaction>
</comment>
<comment type="pathway">
    <text evidence="1">Purine metabolism; AMP biosynthesis via salvage pathway; AMP from adenine: step 1/1.</text>
</comment>
<comment type="subunit">
    <text evidence="1">Homodimer.</text>
</comment>
<comment type="subcellular location">
    <subcellularLocation>
        <location evidence="1">Cytoplasm</location>
    </subcellularLocation>
</comment>
<comment type="similarity">
    <text evidence="1">Belongs to the purine/pyrimidine phosphoribosyltransferase family.</text>
</comment>